<gene>
    <name evidence="1" type="primary">ybeY</name>
    <name type="ordered locus">Tfu_0845</name>
</gene>
<feature type="chain" id="PRO_0000284341" description="Endoribonuclease YbeY">
    <location>
        <begin position="1"/>
        <end position="155"/>
    </location>
</feature>
<feature type="binding site" evidence="1">
    <location>
        <position position="116"/>
    </location>
    <ligand>
        <name>Zn(2+)</name>
        <dbReference type="ChEBI" id="CHEBI:29105"/>
        <note>catalytic</note>
    </ligand>
</feature>
<feature type="binding site" evidence="1">
    <location>
        <position position="120"/>
    </location>
    <ligand>
        <name>Zn(2+)</name>
        <dbReference type="ChEBI" id="CHEBI:29105"/>
        <note>catalytic</note>
    </ligand>
</feature>
<feature type="binding site" evidence="1">
    <location>
        <position position="126"/>
    </location>
    <ligand>
        <name>Zn(2+)</name>
        <dbReference type="ChEBI" id="CHEBI:29105"/>
        <note>catalytic</note>
    </ligand>
</feature>
<name>YBEY_THEFY</name>
<organism>
    <name type="scientific">Thermobifida fusca (strain YX)</name>
    <dbReference type="NCBI Taxonomy" id="269800"/>
    <lineage>
        <taxon>Bacteria</taxon>
        <taxon>Bacillati</taxon>
        <taxon>Actinomycetota</taxon>
        <taxon>Actinomycetes</taxon>
        <taxon>Streptosporangiales</taxon>
        <taxon>Nocardiopsidaceae</taxon>
        <taxon>Thermobifida</taxon>
    </lineage>
</organism>
<proteinExistence type="inferred from homology"/>
<sequence>MSIDVANESGVPADEERLARLARYILDALRVHPLAELSVLLVDEEPMADLHVRWMNEPGPTDVLSFPMDELRPGAPGRTSEPGILGDVVICPQVAARQAERAGHSMQDEIDLLCTHGILHLLGYDHAEPDEHREMFSLQNELLAGWRRSLEEEER</sequence>
<protein>
    <recommendedName>
        <fullName evidence="1">Endoribonuclease YbeY</fullName>
        <ecNumber evidence="1">3.1.-.-</ecNumber>
    </recommendedName>
</protein>
<reference key="1">
    <citation type="journal article" date="2007" name="J. Bacteriol.">
        <title>Genome sequence and analysis of the soil cellulolytic actinomycete Thermobifida fusca YX.</title>
        <authorList>
            <person name="Lykidis A."/>
            <person name="Mavromatis K."/>
            <person name="Ivanova N."/>
            <person name="Anderson I."/>
            <person name="Land M."/>
            <person name="DiBartolo G."/>
            <person name="Martinez M."/>
            <person name="Lapidus A."/>
            <person name="Lucas S."/>
            <person name="Copeland A."/>
            <person name="Richardson P."/>
            <person name="Wilson D.B."/>
            <person name="Kyrpides N."/>
        </authorList>
    </citation>
    <scope>NUCLEOTIDE SEQUENCE [LARGE SCALE GENOMIC DNA]</scope>
    <source>
        <strain>YX</strain>
    </source>
</reference>
<comment type="function">
    <text evidence="1">Single strand-specific metallo-endoribonuclease involved in late-stage 70S ribosome quality control and in maturation of the 3' terminus of the 16S rRNA.</text>
</comment>
<comment type="cofactor">
    <cofactor evidence="1">
        <name>Zn(2+)</name>
        <dbReference type="ChEBI" id="CHEBI:29105"/>
    </cofactor>
    <text evidence="1">Binds 1 zinc ion.</text>
</comment>
<comment type="subcellular location">
    <subcellularLocation>
        <location evidence="1">Cytoplasm</location>
    </subcellularLocation>
</comment>
<comment type="similarity">
    <text evidence="1">Belongs to the endoribonuclease YbeY family.</text>
</comment>
<dbReference type="EC" id="3.1.-.-" evidence="1"/>
<dbReference type="EMBL" id="CP000088">
    <property type="protein sequence ID" value="AAZ54883.1"/>
    <property type="molecule type" value="Genomic_DNA"/>
</dbReference>
<dbReference type="RefSeq" id="WP_011291292.1">
    <property type="nucleotide sequence ID" value="NC_007333.1"/>
</dbReference>
<dbReference type="SMR" id="Q47RN4"/>
<dbReference type="STRING" id="269800.Tfu_0845"/>
<dbReference type="KEGG" id="tfu:Tfu_0845"/>
<dbReference type="eggNOG" id="COG0319">
    <property type="taxonomic scope" value="Bacteria"/>
</dbReference>
<dbReference type="HOGENOM" id="CLU_106710_3_2_11"/>
<dbReference type="OrthoDB" id="9807740at2"/>
<dbReference type="GO" id="GO:0005737">
    <property type="term" value="C:cytoplasm"/>
    <property type="evidence" value="ECO:0007669"/>
    <property type="project" value="UniProtKB-SubCell"/>
</dbReference>
<dbReference type="GO" id="GO:0004222">
    <property type="term" value="F:metalloendopeptidase activity"/>
    <property type="evidence" value="ECO:0007669"/>
    <property type="project" value="InterPro"/>
</dbReference>
<dbReference type="GO" id="GO:0004521">
    <property type="term" value="F:RNA endonuclease activity"/>
    <property type="evidence" value="ECO:0007669"/>
    <property type="project" value="UniProtKB-UniRule"/>
</dbReference>
<dbReference type="GO" id="GO:0008270">
    <property type="term" value="F:zinc ion binding"/>
    <property type="evidence" value="ECO:0007669"/>
    <property type="project" value="UniProtKB-UniRule"/>
</dbReference>
<dbReference type="GO" id="GO:0006364">
    <property type="term" value="P:rRNA processing"/>
    <property type="evidence" value="ECO:0007669"/>
    <property type="project" value="UniProtKB-UniRule"/>
</dbReference>
<dbReference type="Gene3D" id="3.40.390.30">
    <property type="entry name" value="Metalloproteases ('zincins'), catalytic domain"/>
    <property type="match status" value="1"/>
</dbReference>
<dbReference type="HAMAP" id="MF_00009">
    <property type="entry name" value="Endoribonucl_YbeY"/>
    <property type="match status" value="1"/>
</dbReference>
<dbReference type="InterPro" id="IPR023091">
    <property type="entry name" value="MetalPrtase_cat_dom_sf_prd"/>
</dbReference>
<dbReference type="InterPro" id="IPR002036">
    <property type="entry name" value="YbeY"/>
</dbReference>
<dbReference type="InterPro" id="IPR020549">
    <property type="entry name" value="YbeY_CS"/>
</dbReference>
<dbReference type="NCBIfam" id="TIGR00043">
    <property type="entry name" value="rRNA maturation RNase YbeY"/>
    <property type="match status" value="1"/>
</dbReference>
<dbReference type="PANTHER" id="PTHR46986">
    <property type="entry name" value="ENDORIBONUCLEASE YBEY, CHLOROPLASTIC"/>
    <property type="match status" value="1"/>
</dbReference>
<dbReference type="PANTHER" id="PTHR46986:SF1">
    <property type="entry name" value="ENDORIBONUCLEASE YBEY, CHLOROPLASTIC"/>
    <property type="match status" value="1"/>
</dbReference>
<dbReference type="Pfam" id="PF02130">
    <property type="entry name" value="YbeY"/>
    <property type="match status" value="1"/>
</dbReference>
<dbReference type="SUPFAM" id="SSF55486">
    <property type="entry name" value="Metalloproteases ('zincins'), catalytic domain"/>
    <property type="match status" value="1"/>
</dbReference>
<dbReference type="PROSITE" id="PS01306">
    <property type="entry name" value="UPF0054"/>
    <property type="match status" value="1"/>
</dbReference>
<accession>Q47RN4</accession>
<keyword id="KW-0963">Cytoplasm</keyword>
<keyword id="KW-0255">Endonuclease</keyword>
<keyword id="KW-0378">Hydrolase</keyword>
<keyword id="KW-0479">Metal-binding</keyword>
<keyword id="KW-0540">Nuclease</keyword>
<keyword id="KW-0690">Ribosome biogenesis</keyword>
<keyword id="KW-0698">rRNA processing</keyword>
<keyword id="KW-0862">Zinc</keyword>
<evidence type="ECO:0000255" key="1">
    <source>
        <dbReference type="HAMAP-Rule" id="MF_00009"/>
    </source>
</evidence>